<dbReference type="EMBL" id="D13816">
    <property type="protein sequence ID" value="BAA02970.1"/>
    <property type="molecule type" value="Genomic_DNA"/>
</dbReference>
<dbReference type="EMBL" id="D17462">
    <property type="protein sequence ID" value="BAA04276.1"/>
    <property type="molecule type" value="Genomic_DNA"/>
</dbReference>
<dbReference type="EMBL" id="CP003504">
    <property type="protein sequence ID" value="AFM70580.1"/>
    <property type="molecule type" value="Genomic_DNA"/>
</dbReference>
<dbReference type="PIR" id="B46733">
    <property type="entry name" value="B46733"/>
</dbReference>
<dbReference type="RefSeq" id="WP_010718636.1">
    <property type="nucleotide sequence ID" value="NZ_KB946231.1"/>
</dbReference>
<dbReference type="PDB" id="3VR2">
    <property type="method" value="X-ray"/>
    <property type="resolution" value="2.80 A"/>
    <property type="chains" value="D/E/F=1-458"/>
</dbReference>
<dbReference type="PDB" id="3VR3">
    <property type="method" value="X-ray"/>
    <property type="resolution" value="3.40 A"/>
    <property type="chains" value="D/E/F=1-458"/>
</dbReference>
<dbReference type="PDB" id="3VR4">
    <property type="method" value="X-ray"/>
    <property type="resolution" value="2.17 A"/>
    <property type="chains" value="D/E/F=1-458"/>
</dbReference>
<dbReference type="PDB" id="3VR5">
    <property type="method" value="X-ray"/>
    <property type="resolution" value="3.90 A"/>
    <property type="chains" value="D/E/F=1-458"/>
</dbReference>
<dbReference type="PDB" id="3VR6">
    <property type="method" value="X-ray"/>
    <property type="resolution" value="2.68 A"/>
    <property type="chains" value="D/E/F=1-458"/>
</dbReference>
<dbReference type="PDB" id="5KNB">
    <property type="method" value="X-ray"/>
    <property type="resolution" value="3.25 A"/>
    <property type="chains" value="D/E/F=1-458"/>
</dbReference>
<dbReference type="PDB" id="5KNC">
    <property type="method" value="X-ray"/>
    <property type="resolution" value="3.02 A"/>
    <property type="chains" value="D/E/F=1-458"/>
</dbReference>
<dbReference type="PDB" id="5KND">
    <property type="method" value="X-ray"/>
    <property type="resolution" value="2.89 A"/>
    <property type="chains" value="D/E/F=1-458"/>
</dbReference>
<dbReference type="PDB" id="5ZE9">
    <property type="method" value="X-ray"/>
    <property type="resolution" value="2.10 A"/>
    <property type="chains" value="D/E/F=1-458"/>
</dbReference>
<dbReference type="PDB" id="5ZEA">
    <property type="method" value="X-ray"/>
    <property type="resolution" value="3.38 A"/>
    <property type="chains" value="D/E/F/J/K/L=1-455"/>
</dbReference>
<dbReference type="PDB" id="7COQ">
    <property type="method" value="X-ray"/>
    <property type="resolution" value="3.44 A"/>
    <property type="chains" value="D/E/F=1-458"/>
</dbReference>
<dbReference type="PDB" id="7DQC">
    <property type="method" value="X-ray"/>
    <property type="resolution" value="2.71 A"/>
    <property type="chains" value="D/E/F=1-458"/>
</dbReference>
<dbReference type="PDB" id="7DQD">
    <property type="method" value="X-ray"/>
    <property type="resolution" value="3.38 A"/>
    <property type="chains" value="D/E/F/L/M/N=1-458"/>
</dbReference>
<dbReference type="PDB" id="7DQE">
    <property type="method" value="X-ray"/>
    <property type="resolution" value="2.69 A"/>
    <property type="chains" value="D/E/F=1-458"/>
</dbReference>
<dbReference type="PDB" id="8IGU">
    <property type="method" value="X-ray"/>
    <property type="resolution" value="2.77 A"/>
    <property type="chains" value="D/E/F=1-458"/>
</dbReference>
<dbReference type="PDB" id="8IGV">
    <property type="method" value="X-ray"/>
    <property type="resolution" value="3.15 A"/>
    <property type="chains" value="D/E/F=1-458"/>
</dbReference>
<dbReference type="PDB" id="8IGW">
    <property type="method" value="X-ray"/>
    <property type="resolution" value="4.20 A"/>
    <property type="chains" value="D/E/F/J/K/L=1-458"/>
</dbReference>
<dbReference type="PDBsum" id="3VR2"/>
<dbReference type="PDBsum" id="3VR3"/>
<dbReference type="PDBsum" id="3VR4"/>
<dbReference type="PDBsum" id="3VR5"/>
<dbReference type="PDBsum" id="3VR6"/>
<dbReference type="PDBsum" id="5KNB"/>
<dbReference type="PDBsum" id="5KNC"/>
<dbReference type="PDBsum" id="5KND"/>
<dbReference type="PDBsum" id="5ZE9"/>
<dbReference type="PDBsum" id="5ZEA"/>
<dbReference type="PDBsum" id="7COQ"/>
<dbReference type="PDBsum" id="7DQC"/>
<dbReference type="PDBsum" id="7DQD"/>
<dbReference type="PDBsum" id="7DQE"/>
<dbReference type="PDBsum" id="8IGU"/>
<dbReference type="PDBsum" id="8IGV"/>
<dbReference type="PDBsum" id="8IGW"/>
<dbReference type="SMR" id="Q08637"/>
<dbReference type="DIP" id="DIP-60126N"/>
<dbReference type="IntAct" id="Q08637">
    <property type="interactions" value="1"/>
</dbReference>
<dbReference type="TCDB" id="3.A.2.2.2">
    <property type="family name" value="the h+- or na+-translocating f-type, v-type and a-type atpase (f-atpase) superfamily"/>
</dbReference>
<dbReference type="KEGG" id="ehr:EHR_08265"/>
<dbReference type="eggNOG" id="COG1156">
    <property type="taxonomic scope" value="Bacteria"/>
</dbReference>
<dbReference type="HOGENOM" id="CLU_022916_0_0_9"/>
<dbReference type="OrthoDB" id="9802718at2"/>
<dbReference type="BioCyc" id="MetaCyc:MONOMER-14147"/>
<dbReference type="EvolutionaryTrace" id="Q08637"/>
<dbReference type="Proteomes" id="UP000002895">
    <property type="component" value="Chromosome"/>
</dbReference>
<dbReference type="GO" id="GO:0005524">
    <property type="term" value="F:ATP binding"/>
    <property type="evidence" value="ECO:0007669"/>
    <property type="project" value="UniProtKB-UniRule"/>
</dbReference>
<dbReference type="GO" id="GO:0046933">
    <property type="term" value="F:proton-transporting ATP synthase activity, rotational mechanism"/>
    <property type="evidence" value="ECO:0007669"/>
    <property type="project" value="UniProtKB-UniRule"/>
</dbReference>
<dbReference type="GO" id="GO:0042777">
    <property type="term" value="P:proton motive force-driven plasma membrane ATP synthesis"/>
    <property type="evidence" value="ECO:0007669"/>
    <property type="project" value="UniProtKB-UniRule"/>
</dbReference>
<dbReference type="GO" id="GO:0006814">
    <property type="term" value="P:sodium ion transport"/>
    <property type="evidence" value="ECO:0007669"/>
    <property type="project" value="UniProtKB-KW"/>
</dbReference>
<dbReference type="CDD" id="cd18112">
    <property type="entry name" value="ATP-synt_V_A-type_beta_C"/>
    <property type="match status" value="1"/>
</dbReference>
<dbReference type="CDD" id="cd18118">
    <property type="entry name" value="ATP-synt_V_A-type_beta_N"/>
    <property type="match status" value="1"/>
</dbReference>
<dbReference type="CDD" id="cd01135">
    <property type="entry name" value="V_A-ATPase_B"/>
    <property type="match status" value="1"/>
</dbReference>
<dbReference type="Gene3D" id="3.40.50.12240">
    <property type="match status" value="1"/>
</dbReference>
<dbReference type="HAMAP" id="MF_00310">
    <property type="entry name" value="ATP_synth_B_arch"/>
    <property type="match status" value="1"/>
</dbReference>
<dbReference type="InterPro" id="IPR055190">
    <property type="entry name" value="ATP-synt_VA_C"/>
</dbReference>
<dbReference type="InterPro" id="IPR020003">
    <property type="entry name" value="ATPase_a/bsu_AS"/>
</dbReference>
<dbReference type="InterPro" id="IPR004100">
    <property type="entry name" value="ATPase_F1/V1/A1_a/bsu_N"/>
</dbReference>
<dbReference type="InterPro" id="IPR000194">
    <property type="entry name" value="ATPase_F1/V1/A1_a/bsu_nucl-bd"/>
</dbReference>
<dbReference type="InterPro" id="IPR027417">
    <property type="entry name" value="P-loop_NTPase"/>
</dbReference>
<dbReference type="InterPro" id="IPR022879">
    <property type="entry name" value="V-ATPase_su_B/beta"/>
</dbReference>
<dbReference type="NCBIfam" id="NF003235">
    <property type="entry name" value="PRK04196.1"/>
    <property type="match status" value="1"/>
</dbReference>
<dbReference type="PANTHER" id="PTHR43389">
    <property type="entry name" value="V-TYPE PROTON ATPASE SUBUNIT B"/>
    <property type="match status" value="1"/>
</dbReference>
<dbReference type="PANTHER" id="PTHR43389:SF4">
    <property type="entry name" value="V-TYPE PROTON ATPASE SUBUNIT B"/>
    <property type="match status" value="1"/>
</dbReference>
<dbReference type="Pfam" id="PF00006">
    <property type="entry name" value="ATP-synt_ab"/>
    <property type="match status" value="1"/>
</dbReference>
<dbReference type="Pfam" id="PF02874">
    <property type="entry name" value="ATP-synt_ab_N"/>
    <property type="match status" value="1"/>
</dbReference>
<dbReference type="Pfam" id="PF22919">
    <property type="entry name" value="ATP-synt_VA_C"/>
    <property type="match status" value="1"/>
</dbReference>
<dbReference type="PIRSF" id="PIRSF039114">
    <property type="entry name" value="V-ATPsynth_beta/V-ATPase_B"/>
    <property type="match status" value="1"/>
</dbReference>
<dbReference type="SUPFAM" id="SSF47917">
    <property type="entry name" value="C-terminal domain of alpha and beta subunits of F1 ATP synthase"/>
    <property type="match status" value="1"/>
</dbReference>
<dbReference type="SUPFAM" id="SSF52540">
    <property type="entry name" value="P-loop containing nucleoside triphosphate hydrolases"/>
    <property type="match status" value="1"/>
</dbReference>
<dbReference type="PROSITE" id="PS00152">
    <property type="entry name" value="ATPASE_ALPHA_BETA"/>
    <property type="match status" value="1"/>
</dbReference>
<proteinExistence type="evidence at protein level"/>
<feature type="chain" id="PRO_0000144685" description="V-type sodium ATPase subunit B">
    <location>
        <begin position="1"/>
        <end position="458"/>
    </location>
</feature>
<feature type="strand" evidence="6">
    <location>
        <begin position="3"/>
        <end position="5"/>
    </location>
</feature>
<feature type="strand" evidence="4">
    <location>
        <begin position="8"/>
        <end position="12"/>
    </location>
</feature>
<feature type="strand" evidence="4">
    <location>
        <begin position="15"/>
        <end position="18"/>
    </location>
</feature>
<feature type="strand" evidence="4">
    <location>
        <begin position="28"/>
        <end position="33"/>
    </location>
</feature>
<feature type="strand" evidence="3">
    <location>
        <begin position="35"/>
        <end position="37"/>
    </location>
</feature>
<feature type="strand" evidence="4">
    <location>
        <begin position="39"/>
        <end position="48"/>
    </location>
</feature>
<feature type="strand" evidence="4">
    <location>
        <begin position="51"/>
        <end position="56"/>
    </location>
</feature>
<feature type="helix" evidence="4">
    <location>
        <begin position="65"/>
        <end position="67"/>
    </location>
</feature>
<feature type="strand" evidence="4">
    <location>
        <begin position="69"/>
        <end position="76"/>
    </location>
</feature>
<feature type="strand" evidence="4">
    <location>
        <begin position="78"/>
        <end position="81"/>
    </location>
</feature>
<feature type="helix" evidence="4">
    <location>
        <begin position="83"/>
        <end position="85"/>
    </location>
</feature>
<feature type="strand" evidence="4">
    <location>
        <begin position="89"/>
        <end position="91"/>
    </location>
</feature>
<feature type="strand" evidence="6">
    <location>
        <begin position="92"/>
        <end position="94"/>
    </location>
</feature>
<feature type="strand" evidence="5">
    <location>
        <begin position="96"/>
        <end position="98"/>
    </location>
</feature>
<feature type="strand" evidence="4">
    <location>
        <begin position="106"/>
        <end position="110"/>
    </location>
</feature>
<feature type="turn" evidence="4">
    <location>
        <begin position="118"/>
        <end position="120"/>
    </location>
</feature>
<feature type="strand" evidence="4">
    <location>
        <begin position="125"/>
        <end position="127"/>
    </location>
</feature>
<feature type="helix" evidence="4">
    <location>
        <begin position="133"/>
        <end position="136"/>
    </location>
</feature>
<feature type="turn" evidence="2">
    <location>
        <begin position="137"/>
        <end position="139"/>
    </location>
</feature>
<feature type="strand" evidence="4">
    <location>
        <begin position="149"/>
        <end position="151"/>
    </location>
</feature>
<feature type="helix" evidence="4">
    <location>
        <begin position="157"/>
        <end position="167"/>
    </location>
</feature>
<feature type="strand" evidence="6">
    <location>
        <begin position="169"/>
        <end position="172"/>
    </location>
</feature>
<feature type="strand" evidence="4">
    <location>
        <begin position="177"/>
        <end position="186"/>
    </location>
</feature>
<feature type="helix" evidence="4">
    <location>
        <begin position="188"/>
        <end position="201"/>
    </location>
</feature>
<feature type="helix" evidence="4">
    <location>
        <begin position="203"/>
        <end position="206"/>
    </location>
</feature>
<feature type="strand" evidence="4">
    <location>
        <begin position="207"/>
        <end position="213"/>
    </location>
</feature>
<feature type="helix" evidence="4">
    <location>
        <begin position="220"/>
        <end position="237"/>
    </location>
</feature>
<feature type="strand" evidence="4">
    <location>
        <begin position="242"/>
        <end position="248"/>
    </location>
</feature>
<feature type="helix" evidence="4">
    <location>
        <begin position="250"/>
        <end position="263"/>
    </location>
</feature>
<feature type="helix" evidence="4">
    <location>
        <begin position="270"/>
        <end position="272"/>
    </location>
</feature>
<feature type="helix" evidence="4">
    <location>
        <begin position="277"/>
        <end position="285"/>
    </location>
</feature>
<feature type="strand" evidence="4">
    <location>
        <begin position="289"/>
        <end position="291"/>
    </location>
</feature>
<feature type="strand" evidence="4">
    <location>
        <begin position="297"/>
        <end position="305"/>
    </location>
</feature>
<feature type="helix" evidence="4">
    <location>
        <begin position="307"/>
        <end position="309"/>
    </location>
</feature>
<feature type="strand" evidence="3">
    <location>
        <begin position="311"/>
        <end position="313"/>
    </location>
</feature>
<feature type="helix" evidence="4">
    <location>
        <begin position="314"/>
        <end position="320"/>
    </location>
</feature>
<feature type="strand" evidence="4">
    <location>
        <begin position="323"/>
        <end position="329"/>
    </location>
</feature>
<feature type="helix" evidence="4">
    <location>
        <begin position="331"/>
        <end position="335"/>
    </location>
</feature>
<feature type="turn" evidence="4">
    <location>
        <begin position="344"/>
        <end position="346"/>
    </location>
</feature>
<feature type="helix" evidence="4">
    <location>
        <begin position="352"/>
        <end position="355"/>
    </location>
</feature>
<feature type="turn" evidence="4">
    <location>
        <begin position="358"/>
        <end position="360"/>
    </location>
</feature>
<feature type="helix" evidence="4">
    <location>
        <begin position="365"/>
        <end position="389"/>
    </location>
</feature>
<feature type="turn" evidence="4">
    <location>
        <begin position="391"/>
        <end position="393"/>
    </location>
</feature>
<feature type="helix" evidence="4">
    <location>
        <begin position="396"/>
        <end position="411"/>
    </location>
</feature>
<feature type="helix" evidence="4">
    <location>
        <begin position="423"/>
        <end position="434"/>
    </location>
</feature>
<feature type="helix" evidence="4">
    <location>
        <begin position="439"/>
        <end position="441"/>
    </location>
</feature>
<feature type="helix" evidence="4">
    <location>
        <begin position="447"/>
        <end position="453"/>
    </location>
</feature>
<keyword id="KW-0002">3D-structure</keyword>
<keyword id="KW-0903">Direct protein sequencing</keyword>
<keyword id="KW-0406">Ion transport</keyword>
<keyword id="KW-0915">Sodium</keyword>
<keyword id="KW-0739">Sodium transport</keyword>
<keyword id="KW-0813">Transport</keyword>
<reference key="1">
    <citation type="journal article" date="1993" name="J. Biol. Chem.">
        <title>Cloning and sequencing of the genes coding for the A and B subunits of vacuolar-type Na(+)-ATPase from Enterococcus hirae. Coexistence of vacuolar- and F0F1-type ATPases in one bacterial cell.</title>
        <authorList>
            <person name="Takase K."/>
            <person name="Yamato I."/>
            <person name="Kakinuma Y."/>
        </authorList>
    </citation>
    <scope>NUCLEOTIDE SEQUENCE [GENOMIC DNA]</scope>
    <scope>PROTEIN SEQUENCE OF 1-25</scope>
    <source>
        <strain>ATCC 9790 / DSM 20160 / JCM 8729 / LMG 6399 / NBRC 3181 / NCIMB 6459 / NCDO 1258 / NCTC 12367 / WDCM 00089 / R</strain>
    </source>
</reference>
<reference key="2">
    <citation type="journal article" date="2012" name="J. Bacteriol.">
        <title>Genome sequence of Enterococcus hirae (Streptococcus faecalis) ATCC 9790, a model organism for the study of ion transport, bioenergetics, and copper homeostasis.</title>
        <authorList>
            <person name="Gaechter T."/>
            <person name="Wunderlin C."/>
            <person name="Schmidheini T."/>
            <person name="Solioz M."/>
        </authorList>
    </citation>
    <scope>NUCLEOTIDE SEQUENCE [LARGE SCALE GENOMIC DNA]</scope>
    <source>
        <strain>ATCC 9790 / DSM 20160 / JCM 8729 / LMG 6399 / NBRC 3181 / NCIMB 6459 / NCDO 1258 / NCTC 12367 / WDCM 00089 / R</strain>
    </source>
</reference>
<protein>
    <recommendedName>
        <fullName>V-type sodium ATPase subunit B</fullName>
    </recommendedName>
    <alternativeName>
        <fullName>Na(+)-translocating ATPase subunit B</fullName>
    </alternativeName>
    <alternativeName>
        <fullName>V-type sodium pump subunit B</fullName>
    </alternativeName>
</protein>
<name>NTPB_ENTHA</name>
<sequence length="458" mass="51142">MIKEYRTIKEVVGPLMAVEKVSGVKYEELIEVRMQNGEIRRGQVLEVQEDKAMVQIFEGTSGINLKNSSVRFLGHPLQLGVSEDMIGRVFDGLGRPKDNGPEILPEKYLDINGEVINPIARDYPDEFIQTGISAIDHLNTLVRGQKLPVFSGSGLPHKELAAQIARQATVLDSSDDFAVVFAAIGITFEEAEFFMEDFRQTGAIDRSVMFMNLANDPAIERIATPRMALTAAEYLAYEKGMHVLVIMTDMTNYAEALREISAARREVPGRRGYPGYLYTNLATLFERAGRIRGLKGSVTQIPILTMPEDDKTHPIPDLTGYITEGQIILTRELYKSGIQPPIDVLPSLSRLKDKGTGAGKTREDHAATMNQLFAAYAQGKQAKELAVVLGESALSDIDKIYAKFAERFENEYVNQGFYTNRTITETLDLGWELLAMLPRTELKRIKDDLLDKYLPEGK</sequence>
<organism>
    <name type="scientific">Enterococcus hirae (strain ATCC 9790 / DSM 20160 / JCM 8729 / LMG 6399 / NBRC 3181 / NCIMB 6459 / NCDO 1258 / NCTC 12367 / WDCM 00089 / R)</name>
    <dbReference type="NCBI Taxonomy" id="768486"/>
    <lineage>
        <taxon>Bacteria</taxon>
        <taxon>Bacillati</taxon>
        <taxon>Bacillota</taxon>
        <taxon>Bacilli</taxon>
        <taxon>Lactobacillales</taxon>
        <taxon>Enterococcaceae</taxon>
        <taxon>Enterococcus</taxon>
    </lineage>
</organism>
<gene>
    <name type="primary">ntpB</name>
    <name type="ordered locus">EHR_08265</name>
</gene>
<evidence type="ECO:0000305" key="1"/>
<evidence type="ECO:0007829" key="2">
    <source>
        <dbReference type="PDB" id="3VR3"/>
    </source>
</evidence>
<evidence type="ECO:0007829" key="3">
    <source>
        <dbReference type="PDB" id="5KNB"/>
    </source>
</evidence>
<evidence type="ECO:0007829" key="4">
    <source>
        <dbReference type="PDB" id="5ZE9"/>
    </source>
</evidence>
<evidence type="ECO:0007829" key="5">
    <source>
        <dbReference type="PDB" id="7DQC"/>
    </source>
</evidence>
<evidence type="ECO:0007829" key="6">
    <source>
        <dbReference type="PDB" id="7DQE"/>
    </source>
</evidence>
<comment type="function">
    <text>Involved in ATP-driven sodium extrusion.</text>
</comment>
<comment type="interaction">
    <interactant intactId="EBI-16032937">
        <id>Q08637</id>
    </interactant>
    <interactant intactId="EBI-16032906">
        <id>Q08636</id>
        <label>ntpA</label>
    </interactant>
    <organismsDiffer>false</organismsDiffer>
    <experiments>3</experiments>
</comment>
<comment type="induction">
    <text>By increasing intracellular Na(+) concentration.</text>
</comment>
<comment type="similarity">
    <text evidence="1">Belongs to the ATPase alpha/beta chains family.</text>
</comment>
<accession>Q08637</accession>
<accession>I6S1L8</accession>